<feature type="signal peptide" evidence="2">
    <location>
        <begin position="1"/>
        <end position="20"/>
    </location>
</feature>
<feature type="propeptide" id="PRO_0000407057" description="Activation peptide" evidence="6">
    <location>
        <begin position="21"/>
        <end position="71"/>
    </location>
</feature>
<feature type="chain" id="PRO_0000407058" description="Penicillopepsin-1">
    <location>
        <begin position="72"/>
        <end position="397"/>
    </location>
</feature>
<feature type="domain" description="Peptidase A1" evidence="4">
    <location>
        <begin position="87"/>
        <end position="394"/>
    </location>
</feature>
<feature type="active site" evidence="4">
    <location>
        <position position="103"/>
    </location>
</feature>
<feature type="active site" evidence="4">
    <location>
        <position position="285"/>
    </location>
</feature>
<feature type="glycosylation site" description="N-linked (GlcNAc...) asparagine" evidence="3">
    <location>
        <position position="311"/>
    </location>
</feature>
<feature type="disulfide bond" evidence="4">
    <location>
        <begin position="322"/>
        <end position="357"/>
    </location>
</feature>
<sequence length="397" mass="41112">MVVFSQVTVALTCFSAIASAAAVRQEPPQGFTVNQVQKAVPGTRTVNLPGLYANALVKYGATVPATVHAAAVSGSAITTPEADDVEYLTPVTIGSSTLNLDFDTGSADLWVFSSELTSSQQSGHDVYNVGSLGTKLSGASWSISYGDGSSASGDVYKDTVTVGGVKATGQAVEAAKKISSQFLQDKNNDGLLGMAFSSINTVSPTPQKTFFDTVKSSLGEPLFAVTLQGTGRPWHLRFGYIDSDKYTGTLAYADVDDSDGFWSFTADSYKIGTGAAGKSITGIADTGTTLLLLDSSIVTGLLQEGYPGSQNSSSAGGYIFPCSATLPDFTVTINGYDAVVPGKYINFAPVSTGSSSCYGGIQSNSGIGFSIFGDIFLKSQYVVFDSEGPRLGFAAQA</sequence>
<organism>
    <name type="scientific">Penicillium roqueforti</name>
    <dbReference type="NCBI Taxonomy" id="5082"/>
    <lineage>
        <taxon>Eukaryota</taxon>
        <taxon>Fungi</taxon>
        <taxon>Dikarya</taxon>
        <taxon>Ascomycota</taxon>
        <taxon>Pezizomycotina</taxon>
        <taxon>Eurotiomycetes</taxon>
        <taxon>Eurotiomycetidae</taxon>
        <taxon>Eurotiales</taxon>
        <taxon>Aspergillaceae</taxon>
        <taxon>Penicillium</taxon>
    </lineage>
</organism>
<reference key="1">
    <citation type="journal article" date="1997" name="Mol. Gen. Genet.">
        <title>Controls of the expression of aspA, the aspartyl protease gene from Penicillium roqueforti.</title>
        <authorList>
            <person name="Gente S."/>
            <person name="Durand-Poussereau N."/>
            <person name="Fevre M."/>
        </authorList>
    </citation>
    <scope>NUCLEOTIDE SEQUENCE [GENOMIC DNA]</scope>
    <scope>SUBCELLULAR LOCATION</scope>
    <scope>FUNCTION</scope>
    <scope>INDUCTION</scope>
    <source>
        <strain>P2</strain>
    </source>
</reference>
<reference key="2">
    <citation type="journal article" date="1973" name="Biochimie">
        <title>Proteolytic system in Penicillium roqueforti. 2. Purification and properties of acid protease.</title>
        <authorList>
            <person name="Zevaco C."/>
            <person name="Hermier J."/>
            <person name="Gripon J.C."/>
        </authorList>
    </citation>
    <scope>FUNCTION</scope>
    <scope>CATALYTIC ACTIVITY</scope>
    <scope>BIOPHYSICOCHEMICAL PROPERTIES</scope>
    <source>
        <strain>431</strain>
    </source>
</reference>
<keyword id="KW-0064">Aspartyl protease</keyword>
<keyword id="KW-1015">Disulfide bond</keyword>
<keyword id="KW-0325">Glycoprotein</keyword>
<keyword id="KW-0378">Hydrolase</keyword>
<keyword id="KW-0645">Protease</keyword>
<keyword id="KW-0964">Secreted</keyword>
<keyword id="KW-0732">Signal</keyword>
<keyword id="KW-0865">Zymogen</keyword>
<protein>
    <recommendedName>
        <fullName evidence="9">Penicillopepsin-1</fullName>
        <ecNumber evidence="5">3.4.23.20</ecNumber>
    </recommendedName>
    <alternativeName>
        <fullName evidence="7">Acid protease</fullName>
    </alternativeName>
    <alternativeName>
        <fullName evidence="8">Aspartic protease aspA</fullName>
    </alternativeName>
</protein>
<name>PEPA_PENRO</name>
<accession>Q01972</accession>
<proteinExistence type="evidence at protein level"/>
<comment type="function">
    <text evidence="5 6">Secreted aspartic endopeptidase that allows assimilation of proteinaceous substrates. The scissile peptide bond is attacked by a nucleophilic water molecule activated by two aspartic residues in the active site. Shows a broad primary substrate specificity. Favors hydrophobic residues at the P1 and P1' positions, but can also activate trypsinogen and hydrolyze the B chain of insulin between positions 'Gly-20' and 'Glu-21'.</text>
</comment>
<comment type="catalytic activity">
    <reaction evidence="5">
        <text>Hydrolysis of proteins with broad specificity similar to that of pepsin A, preferring hydrophobic residues at P1 and P1', but also cleaving 20-Gly-|-Glu-21 in the B chain of insulin. Clots milk, and activates trypsinogen.</text>
        <dbReference type="EC" id="3.4.23.20"/>
    </reaction>
</comment>
<comment type="biophysicochemical properties">
    <phDependence>
        <text evidence="5">Optimum pH is 3.5.</text>
    </phDependence>
    <temperatureDependence>
        <text evidence="5">Optimum temperature is 50 degrees Celsius.</text>
    </temperatureDependence>
</comment>
<comment type="subunit">
    <text evidence="1">Monomer.</text>
</comment>
<comment type="subcellular location">
    <subcellularLocation>
        <location evidence="6">Secreted</location>
    </subcellularLocation>
</comment>
<comment type="induction">
    <text evidence="6">Repressed by alkaline pH and in presence of ammonia.</text>
</comment>
<comment type="miscellaneous">
    <text evidence="10">Used in the production of blue cheese. During the fermentation process, aspartic protease hydrolyzes casein which leads to clotting of the milk.</text>
</comment>
<comment type="similarity">
    <text evidence="4">Belongs to the peptidase A1 family.</text>
</comment>
<dbReference type="EC" id="3.4.23.20" evidence="5"/>
<dbReference type="EMBL" id="X85984">
    <property type="protein sequence ID" value="CAA59972.1"/>
    <property type="molecule type" value="Genomic_DNA"/>
</dbReference>
<dbReference type="PIR" id="S52783">
    <property type="entry name" value="S52783"/>
</dbReference>
<dbReference type="SMR" id="Q01972"/>
<dbReference type="MEROPS" id="A01.026"/>
<dbReference type="GlyCosmos" id="Q01972">
    <property type="glycosylation" value="1 site, No reported glycans"/>
</dbReference>
<dbReference type="GO" id="GO:0005576">
    <property type="term" value="C:extracellular region"/>
    <property type="evidence" value="ECO:0000314"/>
    <property type="project" value="UniProtKB"/>
</dbReference>
<dbReference type="GO" id="GO:0004190">
    <property type="term" value="F:aspartic-type endopeptidase activity"/>
    <property type="evidence" value="ECO:0000314"/>
    <property type="project" value="UniProtKB"/>
</dbReference>
<dbReference type="GO" id="GO:0006508">
    <property type="term" value="P:proteolysis"/>
    <property type="evidence" value="ECO:0007669"/>
    <property type="project" value="UniProtKB-KW"/>
</dbReference>
<dbReference type="GO" id="GO:0060359">
    <property type="term" value="P:response to ammonium ion"/>
    <property type="evidence" value="ECO:0000314"/>
    <property type="project" value="UniProtKB"/>
</dbReference>
<dbReference type="GO" id="GO:0009268">
    <property type="term" value="P:response to pH"/>
    <property type="evidence" value="ECO:0000314"/>
    <property type="project" value="UniProtKB"/>
</dbReference>
<dbReference type="CDD" id="cd06097">
    <property type="entry name" value="Aspergillopepsin_like"/>
    <property type="match status" value="1"/>
</dbReference>
<dbReference type="FunFam" id="2.40.70.10:FF:000024">
    <property type="entry name" value="Endothiapepsin"/>
    <property type="match status" value="1"/>
</dbReference>
<dbReference type="FunFam" id="2.40.70.10:FF:000026">
    <property type="entry name" value="Endothiapepsin"/>
    <property type="match status" value="1"/>
</dbReference>
<dbReference type="Gene3D" id="2.40.70.10">
    <property type="entry name" value="Acid Proteases"/>
    <property type="match status" value="2"/>
</dbReference>
<dbReference type="InterPro" id="IPR001461">
    <property type="entry name" value="Aspartic_peptidase_A1"/>
</dbReference>
<dbReference type="InterPro" id="IPR001969">
    <property type="entry name" value="Aspartic_peptidase_AS"/>
</dbReference>
<dbReference type="InterPro" id="IPR034163">
    <property type="entry name" value="Aspergillopepsin-like_cat_dom"/>
</dbReference>
<dbReference type="InterPro" id="IPR033121">
    <property type="entry name" value="PEPTIDASE_A1"/>
</dbReference>
<dbReference type="InterPro" id="IPR021109">
    <property type="entry name" value="Peptidase_aspartic_dom_sf"/>
</dbReference>
<dbReference type="PANTHER" id="PTHR47966:SF2">
    <property type="entry name" value="ASPERGILLOPEPSIN-1-RELATED"/>
    <property type="match status" value="1"/>
</dbReference>
<dbReference type="PANTHER" id="PTHR47966">
    <property type="entry name" value="BETA-SITE APP-CLEAVING ENZYME, ISOFORM A-RELATED"/>
    <property type="match status" value="1"/>
</dbReference>
<dbReference type="Pfam" id="PF00026">
    <property type="entry name" value="Asp"/>
    <property type="match status" value="1"/>
</dbReference>
<dbReference type="PRINTS" id="PR00792">
    <property type="entry name" value="PEPSIN"/>
</dbReference>
<dbReference type="SUPFAM" id="SSF50630">
    <property type="entry name" value="Acid proteases"/>
    <property type="match status" value="1"/>
</dbReference>
<dbReference type="PROSITE" id="PS00141">
    <property type="entry name" value="ASP_PROTEASE"/>
    <property type="match status" value="2"/>
</dbReference>
<dbReference type="PROSITE" id="PS51767">
    <property type="entry name" value="PEPTIDASE_A1"/>
    <property type="match status" value="1"/>
</dbReference>
<evidence type="ECO:0000250" key="1">
    <source>
        <dbReference type="UniProtKB" id="Q12567"/>
    </source>
</evidence>
<evidence type="ECO:0000255" key="2"/>
<evidence type="ECO:0000255" key="3">
    <source>
        <dbReference type="PROSITE-ProRule" id="PRU00498"/>
    </source>
</evidence>
<evidence type="ECO:0000255" key="4">
    <source>
        <dbReference type="PROSITE-ProRule" id="PRU01103"/>
    </source>
</evidence>
<evidence type="ECO:0000269" key="5">
    <source>
    </source>
</evidence>
<evidence type="ECO:0000269" key="6">
    <source>
    </source>
</evidence>
<evidence type="ECO:0000303" key="7">
    <source>
    </source>
</evidence>
<evidence type="ECO:0000303" key="8">
    <source>
    </source>
</evidence>
<evidence type="ECO:0000305" key="9"/>
<evidence type="ECO:0000305" key="10">
    <source>
    </source>
</evidence>
<gene>
    <name evidence="8" type="primary">aspA</name>
</gene>